<organism>
    <name type="scientific">Rhodopseudomonas palustris (strain ATCC BAA-98 / CGA009)</name>
    <dbReference type="NCBI Taxonomy" id="258594"/>
    <lineage>
        <taxon>Bacteria</taxon>
        <taxon>Pseudomonadati</taxon>
        <taxon>Pseudomonadota</taxon>
        <taxon>Alphaproteobacteria</taxon>
        <taxon>Hyphomicrobiales</taxon>
        <taxon>Nitrobacteraceae</taxon>
        <taxon>Rhodopseudomonas</taxon>
    </lineage>
</organism>
<comment type="function">
    <text evidence="1">Assembles around the rod to form the L-ring and probably protects the motor/basal body from shearing forces during rotation.</text>
</comment>
<comment type="subunit">
    <text evidence="1">The basal body constitutes a major portion of the flagellar organelle and consists of four rings (L,P,S, and M) mounted on a central rod.</text>
</comment>
<comment type="subcellular location">
    <subcellularLocation>
        <location evidence="1">Cell outer membrane</location>
        <topology evidence="1">Lipid-anchor</topology>
    </subcellularLocation>
    <subcellularLocation>
        <location evidence="1">Bacterial flagellum basal body</location>
    </subcellularLocation>
</comment>
<comment type="similarity">
    <text evidence="1">Belongs to the FlgH family.</text>
</comment>
<feature type="signal peptide" evidence="1">
    <location>
        <begin position="1"/>
        <end position="25"/>
    </location>
</feature>
<feature type="chain" id="PRO_0000009466" description="Flagellar L-ring protein">
    <location>
        <begin position="26"/>
        <end position="252"/>
    </location>
</feature>
<feature type="lipid moiety-binding region" description="N-palmitoyl cysteine" evidence="1">
    <location>
        <position position="26"/>
    </location>
</feature>
<feature type="lipid moiety-binding region" description="S-diacylglycerol cysteine" evidence="1">
    <location>
        <position position="26"/>
    </location>
</feature>
<gene>
    <name evidence="1" type="primary">flgH</name>
    <name type="ordered locus">RPA3902</name>
</gene>
<proteinExistence type="inferred from homology"/>
<dbReference type="EMBL" id="BX572605">
    <property type="protein sequence ID" value="CAE29343.1"/>
    <property type="molecule type" value="Genomic_DNA"/>
</dbReference>
<dbReference type="RefSeq" id="WP_011159438.1">
    <property type="nucleotide sequence ID" value="NZ_CP116810.1"/>
</dbReference>
<dbReference type="SMR" id="Q6N2Z5"/>
<dbReference type="STRING" id="258594.RPA3902"/>
<dbReference type="GeneID" id="66895018"/>
<dbReference type="eggNOG" id="COG2063">
    <property type="taxonomic scope" value="Bacteria"/>
</dbReference>
<dbReference type="HOGENOM" id="CLU_069313_1_2_5"/>
<dbReference type="PhylomeDB" id="Q6N2Z5"/>
<dbReference type="GO" id="GO:0009427">
    <property type="term" value="C:bacterial-type flagellum basal body, distal rod, L ring"/>
    <property type="evidence" value="ECO:0007669"/>
    <property type="project" value="InterPro"/>
</dbReference>
<dbReference type="GO" id="GO:0009279">
    <property type="term" value="C:cell outer membrane"/>
    <property type="evidence" value="ECO:0007669"/>
    <property type="project" value="UniProtKB-SubCell"/>
</dbReference>
<dbReference type="GO" id="GO:0003774">
    <property type="term" value="F:cytoskeletal motor activity"/>
    <property type="evidence" value="ECO:0007669"/>
    <property type="project" value="InterPro"/>
</dbReference>
<dbReference type="GO" id="GO:0071973">
    <property type="term" value="P:bacterial-type flagellum-dependent cell motility"/>
    <property type="evidence" value="ECO:0007669"/>
    <property type="project" value="InterPro"/>
</dbReference>
<dbReference type="HAMAP" id="MF_00415">
    <property type="entry name" value="FlgH"/>
    <property type="match status" value="1"/>
</dbReference>
<dbReference type="InterPro" id="IPR000527">
    <property type="entry name" value="Flag_Lring"/>
</dbReference>
<dbReference type="NCBIfam" id="NF001305">
    <property type="entry name" value="PRK00249.1-5"/>
    <property type="match status" value="1"/>
</dbReference>
<dbReference type="PANTHER" id="PTHR34933">
    <property type="entry name" value="FLAGELLAR L-RING PROTEIN"/>
    <property type="match status" value="1"/>
</dbReference>
<dbReference type="PANTHER" id="PTHR34933:SF1">
    <property type="entry name" value="FLAGELLAR L-RING PROTEIN"/>
    <property type="match status" value="1"/>
</dbReference>
<dbReference type="Pfam" id="PF02107">
    <property type="entry name" value="FlgH"/>
    <property type="match status" value="1"/>
</dbReference>
<dbReference type="PRINTS" id="PR01008">
    <property type="entry name" value="FLGLRINGFLGH"/>
</dbReference>
<dbReference type="PROSITE" id="PS51257">
    <property type="entry name" value="PROKAR_LIPOPROTEIN"/>
    <property type="match status" value="1"/>
</dbReference>
<reference key="1">
    <citation type="journal article" date="2004" name="Nat. Biotechnol.">
        <title>Complete genome sequence of the metabolically versatile photosynthetic bacterium Rhodopseudomonas palustris.</title>
        <authorList>
            <person name="Larimer F.W."/>
            <person name="Chain P."/>
            <person name="Hauser L."/>
            <person name="Lamerdin J.E."/>
            <person name="Malfatti S."/>
            <person name="Do L."/>
            <person name="Land M.L."/>
            <person name="Pelletier D.A."/>
            <person name="Beatty J.T."/>
            <person name="Lang A.S."/>
            <person name="Tabita F.R."/>
            <person name="Gibson J.L."/>
            <person name="Hanson T.E."/>
            <person name="Bobst C."/>
            <person name="Torres y Torres J.L."/>
            <person name="Peres C."/>
            <person name="Harrison F.H."/>
            <person name="Gibson J."/>
            <person name="Harwood C.S."/>
        </authorList>
    </citation>
    <scope>NUCLEOTIDE SEQUENCE [LARGE SCALE GENOMIC DNA]</scope>
    <source>
        <strain>ATCC BAA-98 / CGA009</strain>
    </source>
</reference>
<name>FLGH_RHOPA</name>
<accession>Q6N2Z5</accession>
<evidence type="ECO:0000255" key="1">
    <source>
        <dbReference type="HAMAP-Rule" id="MF_00415"/>
    </source>
</evidence>
<keyword id="KW-0975">Bacterial flagellum</keyword>
<keyword id="KW-0998">Cell outer membrane</keyword>
<keyword id="KW-0449">Lipoprotein</keyword>
<keyword id="KW-0472">Membrane</keyword>
<keyword id="KW-0564">Palmitate</keyword>
<keyword id="KW-0732">Signal</keyword>
<sequence length="252" mass="27024">MSKSVPLQRIVLVAALMATGGLAGGCSSIDRLAAIGERPALTPIENPTTQPGYKPVQMPMPKPEVASYNANSLWRNGSRAFFKDQRAAKVGDILTVTVNFTDKANIANETQRSRTSKEDSGITDFIGSKTITTPATAVLPGRILTTDSTSSSDGKGSVQRQEALQTNVAAVVTQVLPNGNLVVEGKQEIRVNFEIRELIVAGIVRPEDIQSDNTIDSSKIAQARIAYGGRGQITDVQQPRYGQQVMDVLLPF</sequence>
<protein>
    <recommendedName>
        <fullName evidence="1">Flagellar L-ring protein</fullName>
    </recommendedName>
    <alternativeName>
        <fullName evidence="1">Basal body L-ring protein</fullName>
    </alternativeName>
</protein>